<organism>
    <name type="scientific">Hydrogenovibrio crunogenus (strain DSM 25203 / XCL-2)</name>
    <name type="common">Thiomicrospira crunogena</name>
    <dbReference type="NCBI Taxonomy" id="317025"/>
    <lineage>
        <taxon>Bacteria</taxon>
        <taxon>Pseudomonadati</taxon>
        <taxon>Pseudomonadota</taxon>
        <taxon>Gammaproteobacteria</taxon>
        <taxon>Thiotrichales</taxon>
        <taxon>Piscirickettsiaceae</taxon>
        <taxon>Hydrogenovibrio</taxon>
    </lineage>
</organism>
<sequence length="239" mass="26446">MGRAYQNRKESMAKTSDAKAKVYSKFSREIYVTAKSGGVEPESNLALQGLIERAKKAQVPAHVIDKALDKAKGGGGEDFAIARYEGYGPGNSMVIIECLTDNPNRTFGDVRSCFTKTKTKIGTQGSVSHMFDHAAILVFAGEDEEAVLEALLMADVDVSDIENEDGKISVFVPHTEYAKAKTALVDAFGAIDFEVDEIQFLPHMTKPIDNEEDRELFEKFLEMLDDLDDVQNVYYDVEL</sequence>
<evidence type="ECO:0000255" key="1">
    <source>
        <dbReference type="HAMAP-Rule" id="MF_00693"/>
    </source>
</evidence>
<protein>
    <recommendedName>
        <fullName evidence="1">Probable transcriptional regulatory protein Tcr_1104</fullName>
    </recommendedName>
</protein>
<keyword id="KW-0963">Cytoplasm</keyword>
<keyword id="KW-0238">DNA-binding</keyword>
<keyword id="KW-0804">Transcription</keyword>
<keyword id="KW-0805">Transcription regulation</keyword>
<proteinExistence type="inferred from homology"/>
<gene>
    <name type="ordered locus">Tcr_1104</name>
</gene>
<name>Y1104_HYDCU</name>
<dbReference type="EMBL" id="CP000109">
    <property type="protein sequence ID" value="ABB41699.1"/>
    <property type="molecule type" value="Genomic_DNA"/>
</dbReference>
<dbReference type="SMR" id="Q31GM4"/>
<dbReference type="STRING" id="317025.Tcr_1104"/>
<dbReference type="KEGG" id="tcx:Tcr_1104"/>
<dbReference type="eggNOG" id="COG0217">
    <property type="taxonomic scope" value="Bacteria"/>
</dbReference>
<dbReference type="HOGENOM" id="CLU_062974_2_0_6"/>
<dbReference type="OrthoDB" id="9781053at2"/>
<dbReference type="GO" id="GO:0005829">
    <property type="term" value="C:cytosol"/>
    <property type="evidence" value="ECO:0007669"/>
    <property type="project" value="TreeGrafter"/>
</dbReference>
<dbReference type="GO" id="GO:0003677">
    <property type="term" value="F:DNA binding"/>
    <property type="evidence" value="ECO:0007669"/>
    <property type="project" value="UniProtKB-UniRule"/>
</dbReference>
<dbReference type="GO" id="GO:0006355">
    <property type="term" value="P:regulation of DNA-templated transcription"/>
    <property type="evidence" value="ECO:0007669"/>
    <property type="project" value="UniProtKB-UniRule"/>
</dbReference>
<dbReference type="FunFam" id="1.10.10.200:FF:000003">
    <property type="entry name" value="Probable transcriptional regulatory protein YeeN"/>
    <property type="match status" value="1"/>
</dbReference>
<dbReference type="Gene3D" id="1.10.10.200">
    <property type="match status" value="1"/>
</dbReference>
<dbReference type="Gene3D" id="3.30.70.980">
    <property type="match status" value="2"/>
</dbReference>
<dbReference type="HAMAP" id="MF_00693">
    <property type="entry name" value="Transcrip_reg_TACO1"/>
    <property type="match status" value="1"/>
</dbReference>
<dbReference type="InterPro" id="IPR017856">
    <property type="entry name" value="Integrase-like_N"/>
</dbReference>
<dbReference type="InterPro" id="IPR048300">
    <property type="entry name" value="TACO1_YebC-like_2nd/3rd_dom"/>
</dbReference>
<dbReference type="InterPro" id="IPR049083">
    <property type="entry name" value="TACO1_YebC_N"/>
</dbReference>
<dbReference type="InterPro" id="IPR002876">
    <property type="entry name" value="Transcrip_reg_TACO1-like"/>
</dbReference>
<dbReference type="InterPro" id="IPR026564">
    <property type="entry name" value="Transcrip_reg_TACO1-like_dom3"/>
</dbReference>
<dbReference type="InterPro" id="IPR029072">
    <property type="entry name" value="YebC-like"/>
</dbReference>
<dbReference type="NCBIfam" id="NF009044">
    <property type="entry name" value="PRK12378.1"/>
    <property type="match status" value="1"/>
</dbReference>
<dbReference type="PANTHER" id="PTHR12532">
    <property type="entry name" value="TRANSLATIONAL ACTIVATOR OF CYTOCHROME C OXIDASE 1"/>
    <property type="match status" value="1"/>
</dbReference>
<dbReference type="PANTHER" id="PTHR12532:SF0">
    <property type="entry name" value="TRANSLATIONAL ACTIVATOR OF CYTOCHROME C OXIDASE 1"/>
    <property type="match status" value="1"/>
</dbReference>
<dbReference type="Pfam" id="PF20772">
    <property type="entry name" value="TACO1_YebC_N"/>
    <property type="match status" value="1"/>
</dbReference>
<dbReference type="Pfam" id="PF01709">
    <property type="entry name" value="Transcrip_reg"/>
    <property type="match status" value="1"/>
</dbReference>
<dbReference type="SUPFAM" id="SSF75625">
    <property type="entry name" value="YebC-like"/>
    <property type="match status" value="1"/>
</dbReference>
<reference key="1">
    <citation type="journal article" date="2006" name="PLoS Biol.">
        <title>The genome of deep-sea vent chemolithoautotroph Thiomicrospira crunogena XCL-2.</title>
        <authorList>
            <person name="Scott K.M."/>
            <person name="Sievert S.M."/>
            <person name="Abril F.N."/>
            <person name="Ball L.A."/>
            <person name="Barrett C.J."/>
            <person name="Blake R.A."/>
            <person name="Boller A.J."/>
            <person name="Chain P.S.G."/>
            <person name="Clark J.A."/>
            <person name="Davis C.R."/>
            <person name="Detter C."/>
            <person name="Do K.F."/>
            <person name="Dobrinski K.P."/>
            <person name="Faza B.I."/>
            <person name="Fitzpatrick K.A."/>
            <person name="Freyermuth S.K."/>
            <person name="Harmer T.L."/>
            <person name="Hauser L.J."/>
            <person name="Huegler M."/>
            <person name="Kerfeld C.A."/>
            <person name="Klotz M.G."/>
            <person name="Kong W.W."/>
            <person name="Land M."/>
            <person name="Lapidus A."/>
            <person name="Larimer F.W."/>
            <person name="Longo D.L."/>
            <person name="Lucas S."/>
            <person name="Malfatti S.A."/>
            <person name="Massey S.E."/>
            <person name="Martin D.D."/>
            <person name="McCuddin Z."/>
            <person name="Meyer F."/>
            <person name="Moore J.L."/>
            <person name="Ocampo L.H. Jr."/>
            <person name="Paul J.H."/>
            <person name="Paulsen I.T."/>
            <person name="Reep D.K."/>
            <person name="Ren Q."/>
            <person name="Ross R.L."/>
            <person name="Sato P.Y."/>
            <person name="Thomas P."/>
            <person name="Tinkham L.E."/>
            <person name="Zeruth G.T."/>
        </authorList>
    </citation>
    <scope>NUCLEOTIDE SEQUENCE [LARGE SCALE GENOMIC DNA]</scope>
    <source>
        <strain>DSM 25203 / XCL-2</strain>
    </source>
</reference>
<feature type="chain" id="PRO_0000257155" description="Probable transcriptional regulatory protein Tcr_1104">
    <location>
        <begin position="1"/>
        <end position="239"/>
    </location>
</feature>
<comment type="subcellular location">
    <subcellularLocation>
        <location evidence="1">Cytoplasm</location>
    </subcellularLocation>
</comment>
<comment type="similarity">
    <text evidence="1">Belongs to the TACO1 family.</text>
</comment>
<accession>Q31GM4</accession>